<accession>P0AG77</accession>
<accession>P13457</accession>
<feature type="chain" id="PRO_0000182196" description="Nuclease SbcCD subunit D">
    <location>
        <begin position="1"/>
        <end position="400"/>
    </location>
</feature>
<dbReference type="EMBL" id="AE005174">
    <property type="protein sequence ID" value="AAG54744.1"/>
    <property type="molecule type" value="Genomic_DNA"/>
</dbReference>
<dbReference type="EMBL" id="BA000007">
    <property type="protein sequence ID" value="BAB33871.1"/>
    <property type="molecule type" value="Genomic_DNA"/>
</dbReference>
<dbReference type="PIR" id="D85535">
    <property type="entry name" value="D85535"/>
</dbReference>
<dbReference type="PIR" id="H90684">
    <property type="entry name" value="H90684"/>
</dbReference>
<dbReference type="RefSeq" id="NP_308475.1">
    <property type="nucleotide sequence ID" value="NC_002695.1"/>
</dbReference>
<dbReference type="RefSeq" id="WP_001221319.1">
    <property type="nucleotide sequence ID" value="NZ_VOAI01000005.1"/>
</dbReference>
<dbReference type="SMR" id="P0AG77"/>
<dbReference type="STRING" id="155864.Z0496"/>
<dbReference type="GeneID" id="914550"/>
<dbReference type="GeneID" id="93777062"/>
<dbReference type="KEGG" id="ece:Z0496"/>
<dbReference type="KEGG" id="ecs:ECs_0448"/>
<dbReference type="PATRIC" id="fig|386585.9.peg.545"/>
<dbReference type="eggNOG" id="COG0420">
    <property type="taxonomic scope" value="Bacteria"/>
</dbReference>
<dbReference type="HOGENOM" id="CLU_038045_2_0_6"/>
<dbReference type="OMA" id="LGHLHGC"/>
<dbReference type="Proteomes" id="UP000000558">
    <property type="component" value="Chromosome"/>
</dbReference>
<dbReference type="Proteomes" id="UP000002519">
    <property type="component" value="Chromosome"/>
</dbReference>
<dbReference type="GO" id="GO:0008408">
    <property type="term" value="F:3'-5' exonuclease activity"/>
    <property type="evidence" value="ECO:0007669"/>
    <property type="project" value="InterPro"/>
</dbReference>
<dbReference type="GO" id="GO:0004519">
    <property type="term" value="F:endonuclease activity"/>
    <property type="evidence" value="ECO:0007669"/>
    <property type="project" value="UniProtKB-KW"/>
</dbReference>
<dbReference type="GO" id="GO:0006310">
    <property type="term" value="P:DNA recombination"/>
    <property type="evidence" value="ECO:0007669"/>
    <property type="project" value="UniProtKB-KW"/>
</dbReference>
<dbReference type="GO" id="GO:0006260">
    <property type="term" value="P:DNA replication"/>
    <property type="evidence" value="ECO:0007669"/>
    <property type="project" value="UniProtKB-KW"/>
</dbReference>
<dbReference type="CDD" id="cd00840">
    <property type="entry name" value="MPP_Mre11_N"/>
    <property type="match status" value="1"/>
</dbReference>
<dbReference type="FunFam" id="3.30.160.720:FF:000001">
    <property type="entry name" value="Nuclease SbcCD subunit D"/>
    <property type="match status" value="1"/>
</dbReference>
<dbReference type="FunFam" id="3.60.21.10:FF:000163">
    <property type="entry name" value="Nuclease SbcCD subunit D"/>
    <property type="match status" value="1"/>
</dbReference>
<dbReference type="Gene3D" id="3.30.160.720">
    <property type="match status" value="1"/>
</dbReference>
<dbReference type="Gene3D" id="3.60.21.10">
    <property type="match status" value="1"/>
</dbReference>
<dbReference type="InterPro" id="IPR004843">
    <property type="entry name" value="Calcineurin-like_PHP_ApaH"/>
</dbReference>
<dbReference type="InterPro" id="IPR050535">
    <property type="entry name" value="DNA_Repair-Maintenance_Comp"/>
</dbReference>
<dbReference type="InterPro" id="IPR029052">
    <property type="entry name" value="Metallo-depent_PP-like"/>
</dbReference>
<dbReference type="InterPro" id="IPR041796">
    <property type="entry name" value="Mre11_N"/>
</dbReference>
<dbReference type="InterPro" id="IPR004593">
    <property type="entry name" value="SbcD"/>
</dbReference>
<dbReference type="InterPro" id="IPR026843">
    <property type="entry name" value="SbcD_C"/>
</dbReference>
<dbReference type="NCBIfam" id="NF008206">
    <property type="entry name" value="PRK10966.1"/>
    <property type="match status" value="1"/>
</dbReference>
<dbReference type="NCBIfam" id="TIGR00619">
    <property type="entry name" value="sbcd"/>
    <property type="match status" value="1"/>
</dbReference>
<dbReference type="PANTHER" id="PTHR30337">
    <property type="entry name" value="COMPONENT OF ATP-DEPENDENT DSDNA EXONUCLEASE"/>
    <property type="match status" value="1"/>
</dbReference>
<dbReference type="PANTHER" id="PTHR30337:SF0">
    <property type="entry name" value="NUCLEASE SBCCD SUBUNIT D"/>
    <property type="match status" value="1"/>
</dbReference>
<dbReference type="Pfam" id="PF00149">
    <property type="entry name" value="Metallophos"/>
    <property type="match status" value="1"/>
</dbReference>
<dbReference type="Pfam" id="PF12320">
    <property type="entry name" value="SbcD_C"/>
    <property type="match status" value="1"/>
</dbReference>
<dbReference type="SUPFAM" id="SSF56300">
    <property type="entry name" value="Metallo-dependent phosphatases"/>
    <property type="match status" value="1"/>
</dbReference>
<comment type="function">
    <text evidence="1">SbcCD cleaves DNA hairpin structures. These structures can inhibit DNA replication and are intermediates in certain DNA recombination reactions. The complex acts as a 3'-&gt;5' double strand exonuclease that can open hairpins. It also has a 5' single-strand endonuclease activity (By similarity).</text>
</comment>
<comment type="subunit">
    <text evidence="1">Heterodimer of SbcC and SbcD.</text>
</comment>
<comment type="similarity">
    <text evidence="2">Belongs to the SbcD family.</text>
</comment>
<protein>
    <recommendedName>
        <fullName>Nuclease SbcCD subunit D</fullName>
    </recommendedName>
</protein>
<evidence type="ECO:0000250" key="1"/>
<evidence type="ECO:0000305" key="2"/>
<gene>
    <name type="primary">sbcD</name>
    <name type="ordered locus">Z0496</name>
    <name type="ordered locus">ECs0448</name>
</gene>
<keyword id="KW-0233">DNA recombination</keyword>
<keyword id="KW-0235">DNA replication</keyword>
<keyword id="KW-0255">Endonuclease</keyword>
<keyword id="KW-0269">Exonuclease</keyword>
<keyword id="KW-0378">Hydrolase</keyword>
<keyword id="KW-0540">Nuclease</keyword>
<keyword id="KW-1185">Reference proteome</keyword>
<proteinExistence type="inferred from homology"/>
<reference key="1">
    <citation type="journal article" date="2001" name="Nature">
        <title>Genome sequence of enterohaemorrhagic Escherichia coli O157:H7.</title>
        <authorList>
            <person name="Perna N.T."/>
            <person name="Plunkett G. III"/>
            <person name="Burland V."/>
            <person name="Mau B."/>
            <person name="Glasner J.D."/>
            <person name="Rose D.J."/>
            <person name="Mayhew G.F."/>
            <person name="Evans P.S."/>
            <person name="Gregor J."/>
            <person name="Kirkpatrick H.A."/>
            <person name="Posfai G."/>
            <person name="Hackett J."/>
            <person name="Klink S."/>
            <person name="Boutin A."/>
            <person name="Shao Y."/>
            <person name="Miller L."/>
            <person name="Grotbeck E.J."/>
            <person name="Davis N.W."/>
            <person name="Lim A."/>
            <person name="Dimalanta E.T."/>
            <person name="Potamousis K."/>
            <person name="Apodaca J."/>
            <person name="Anantharaman T.S."/>
            <person name="Lin J."/>
            <person name="Yen G."/>
            <person name="Schwartz D.C."/>
            <person name="Welch R.A."/>
            <person name="Blattner F.R."/>
        </authorList>
    </citation>
    <scope>NUCLEOTIDE SEQUENCE [LARGE SCALE GENOMIC DNA]</scope>
    <source>
        <strain>O157:H7 / EDL933 / ATCC 700927 / EHEC</strain>
    </source>
</reference>
<reference key="2">
    <citation type="journal article" date="2001" name="DNA Res.">
        <title>Complete genome sequence of enterohemorrhagic Escherichia coli O157:H7 and genomic comparison with a laboratory strain K-12.</title>
        <authorList>
            <person name="Hayashi T."/>
            <person name="Makino K."/>
            <person name="Ohnishi M."/>
            <person name="Kurokawa K."/>
            <person name="Ishii K."/>
            <person name="Yokoyama K."/>
            <person name="Han C.-G."/>
            <person name="Ohtsubo E."/>
            <person name="Nakayama K."/>
            <person name="Murata T."/>
            <person name="Tanaka M."/>
            <person name="Tobe T."/>
            <person name="Iida T."/>
            <person name="Takami H."/>
            <person name="Honda T."/>
            <person name="Sasakawa C."/>
            <person name="Ogasawara N."/>
            <person name="Yasunaga T."/>
            <person name="Kuhara S."/>
            <person name="Shiba T."/>
            <person name="Hattori M."/>
            <person name="Shinagawa H."/>
        </authorList>
    </citation>
    <scope>NUCLEOTIDE SEQUENCE [LARGE SCALE GENOMIC DNA]</scope>
    <source>
        <strain>O157:H7 / Sakai / RIMD 0509952 / EHEC</strain>
    </source>
</reference>
<sequence>MRILHTSDWHLGQNFYSKSREAEHQAFLDWLLETAQTHQVDAIIVAGDVFDTGSPPSYARTLYNRFVVNLQQTGCHLVVLAGNHDSVATLNESRDIMAFLNTTVVASAGHAPQILPRRDGTPGAVLCPIPFLRPRDIITSQAGLNGIEKQQHLLAAITDYYQQHYADACKLRGDQPLPIIATGHLTTVGASKSDAVRDIYIGTLDAFPAQNFPPADYIALGHIHRAQIIGGMEHVRYCGSPIPLSFDECGKSKYVHLVTFSNGKLESVENLNVPVTQPMAVLKGDLASITAQLEQWRDVSQEPPVWLDIEITTDEYLHDIQRKIQALTESLPVEVLLVRRSREQRERVLASQQRETLSELSVEEVFNRRLALEELDESQQQRLQHLFTTTLHTLAGEHEA</sequence>
<name>SBCD_ECO57</name>
<organism>
    <name type="scientific">Escherichia coli O157:H7</name>
    <dbReference type="NCBI Taxonomy" id="83334"/>
    <lineage>
        <taxon>Bacteria</taxon>
        <taxon>Pseudomonadati</taxon>
        <taxon>Pseudomonadota</taxon>
        <taxon>Gammaproteobacteria</taxon>
        <taxon>Enterobacterales</taxon>
        <taxon>Enterobacteriaceae</taxon>
        <taxon>Escherichia</taxon>
    </lineage>
</organism>